<organism>
    <name type="scientific">Mus musculus</name>
    <name type="common">Mouse</name>
    <dbReference type="NCBI Taxonomy" id="10090"/>
    <lineage>
        <taxon>Eukaryota</taxon>
        <taxon>Metazoa</taxon>
        <taxon>Chordata</taxon>
        <taxon>Craniata</taxon>
        <taxon>Vertebrata</taxon>
        <taxon>Euteleostomi</taxon>
        <taxon>Mammalia</taxon>
        <taxon>Eutheria</taxon>
        <taxon>Euarchontoglires</taxon>
        <taxon>Glires</taxon>
        <taxon>Rodentia</taxon>
        <taxon>Myomorpha</taxon>
        <taxon>Muroidea</taxon>
        <taxon>Muridae</taxon>
        <taxon>Murinae</taxon>
        <taxon>Mus</taxon>
        <taxon>Mus</taxon>
    </lineage>
</organism>
<accession>O35392</accession>
<accession>A2AD43</accession>
<sequence>MTLGSCCCEIMSSESSPAALSEPDADIDVVGGGSGGGELTARSGPRAPRDVLPHGHEPPPEEAEADVAEDEEESGGCSDCEPRALAPRGAAAAAGSPGPGVQAARGATGPGPGPGPPSGGAATRSPLVKPPYSYIALITMAILQSPKKRLTLSEICEFISGRFPYYREKFPAWQNSIRHNLSLNDCFVKIPREPGNPGKGNYWTLDPESADMFDNGSFLRRRKRFKRQPLPPPHPHPHPHPELLLRGGAAAAGDPGAFLSSFAAYGAYGYGYGLALPAYGAPPPGPAPHPHPHPHAFAFAATAPCQLSVPPGRAAAPPPGPPTASVFASAASAPAPAPAPGSGPSPAGLPAFLGAELGCAKAFYPASLSPPAAGTAASLSTALLRQGLKTDAGGGAGGGGAGTGQRPSFSIDHIMGHGGGGAAPPGSGDGSPGSPFAAAAGPGGQAQVLAMLTAPALTPVAGHIRLSHPGDSLLSSGPSFASKVAGLSGCHF</sequence>
<dbReference type="EMBL" id="AF023915">
    <property type="protein sequence ID" value="AAB81275.1"/>
    <property type="molecule type" value="mRNA"/>
</dbReference>
<dbReference type="EMBL" id="AL670035">
    <property type="status" value="NOT_ANNOTATED_CDS"/>
    <property type="molecule type" value="Genomic_DNA"/>
</dbReference>
<dbReference type="CCDS" id="CCDS18482.1"/>
<dbReference type="RefSeq" id="NP_032619.1">
    <property type="nucleotide sequence ID" value="NM_008593.3"/>
</dbReference>
<dbReference type="SMR" id="O35392"/>
<dbReference type="FunCoup" id="O35392">
    <property type="interactions" value="14"/>
</dbReference>
<dbReference type="STRING" id="10090.ENSMUSP00000066868"/>
<dbReference type="iPTMnet" id="O35392"/>
<dbReference type="PhosphoSitePlus" id="O35392"/>
<dbReference type="PaxDb" id="10090-ENSMUSP00000066868"/>
<dbReference type="PeptideAtlas" id="O35392"/>
<dbReference type="ProteomicsDB" id="271792"/>
<dbReference type="Antibodypedia" id="32890">
    <property type="antibodies" value="109 antibodies from 21 providers"/>
</dbReference>
<dbReference type="DNASU" id="17301"/>
<dbReference type="Ensembl" id="ENSMUST00000068654.5">
    <property type="protein sequence ID" value="ENSMUSP00000066868.4"/>
    <property type="gene ID" value="ENSMUSG00000055210.5"/>
</dbReference>
<dbReference type="GeneID" id="17301"/>
<dbReference type="KEGG" id="mmu:17301"/>
<dbReference type="UCSC" id="uc012dix.1">
    <property type="organism name" value="mouse"/>
</dbReference>
<dbReference type="AGR" id="MGI:1347471"/>
<dbReference type="CTD" id="2306"/>
<dbReference type="MGI" id="MGI:1347471">
    <property type="gene designation" value="Foxd2"/>
</dbReference>
<dbReference type="VEuPathDB" id="HostDB:ENSMUSG00000055210"/>
<dbReference type="eggNOG" id="KOG2294">
    <property type="taxonomic scope" value="Eukaryota"/>
</dbReference>
<dbReference type="GeneTree" id="ENSGT00940000157140"/>
<dbReference type="HOGENOM" id="CLU_040357_5_0_1"/>
<dbReference type="InParanoid" id="O35392"/>
<dbReference type="OMA" id="TNLNNCP"/>
<dbReference type="OrthoDB" id="5402974at2759"/>
<dbReference type="PhylomeDB" id="O35392"/>
<dbReference type="TreeFam" id="TF316127"/>
<dbReference type="BioGRID-ORCS" id="17301">
    <property type="hits" value="1 hit in 79 CRISPR screens"/>
</dbReference>
<dbReference type="ChiTaRS" id="Foxd2">
    <property type="organism name" value="mouse"/>
</dbReference>
<dbReference type="PRO" id="PR:O35392"/>
<dbReference type="Proteomes" id="UP000000589">
    <property type="component" value="Chromosome 4"/>
</dbReference>
<dbReference type="RNAct" id="O35392">
    <property type="molecule type" value="protein"/>
</dbReference>
<dbReference type="Bgee" id="ENSMUSG00000055210">
    <property type="expression patterns" value="Expressed in lumbar dorsal root ganglion and 106 other cell types or tissues"/>
</dbReference>
<dbReference type="GO" id="GO:0005634">
    <property type="term" value="C:nucleus"/>
    <property type="evidence" value="ECO:0007669"/>
    <property type="project" value="UniProtKB-SubCell"/>
</dbReference>
<dbReference type="GO" id="GO:0001228">
    <property type="term" value="F:DNA-binding transcription activator activity, RNA polymerase II-specific"/>
    <property type="evidence" value="ECO:0007669"/>
    <property type="project" value="Ensembl"/>
</dbReference>
<dbReference type="GO" id="GO:1990837">
    <property type="term" value="F:sequence-specific double-stranded DNA binding"/>
    <property type="evidence" value="ECO:0007669"/>
    <property type="project" value="Ensembl"/>
</dbReference>
<dbReference type="CDD" id="cd20046">
    <property type="entry name" value="FH_FOXD1_D2-like"/>
    <property type="match status" value="1"/>
</dbReference>
<dbReference type="FunFam" id="1.10.10.10:FF:000016">
    <property type="entry name" value="Forkhead box protein I1"/>
    <property type="match status" value="1"/>
</dbReference>
<dbReference type="Gene3D" id="1.10.10.10">
    <property type="entry name" value="Winged helix-like DNA-binding domain superfamily/Winged helix DNA-binding domain"/>
    <property type="match status" value="1"/>
</dbReference>
<dbReference type="InterPro" id="IPR001766">
    <property type="entry name" value="Fork_head_dom"/>
</dbReference>
<dbReference type="InterPro" id="IPR050211">
    <property type="entry name" value="FOX_domain-containing"/>
</dbReference>
<dbReference type="InterPro" id="IPR018122">
    <property type="entry name" value="TF_fork_head_CS_1"/>
</dbReference>
<dbReference type="InterPro" id="IPR030456">
    <property type="entry name" value="TF_fork_head_CS_2"/>
</dbReference>
<dbReference type="InterPro" id="IPR036388">
    <property type="entry name" value="WH-like_DNA-bd_sf"/>
</dbReference>
<dbReference type="InterPro" id="IPR036390">
    <property type="entry name" value="WH_DNA-bd_sf"/>
</dbReference>
<dbReference type="PANTHER" id="PTHR11829">
    <property type="entry name" value="FORKHEAD BOX PROTEIN"/>
    <property type="match status" value="1"/>
</dbReference>
<dbReference type="PANTHER" id="PTHR11829:SF373">
    <property type="entry name" value="FORKHEAD BOX PROTEIN D2"/>
    <property type="match status" value="1"/>
</dbReference>
<dbReference type="Pfam" id="PF00250">
    <property type="entry name" value="Forkhead"/>
    <property type="match status" value="1"/>
</dbReference>
<dbReference type="PRINTS" id="PR00053">
    <property type="entry name" value="FORKHEAD"/>
</dbReference>
<dbReference type="SMART" id="SM00339">
    <property type="entry name" value="FH"/>
    <property type="match status" value="1"/>
</dbReference>
<dbReference type="SUPFAM" id="SSF46785">
    <property type="entry name" value="Winged helix' DNA-binding domain"/>
    <property type="match status" value="1"/>
</dbReference>
<dbReference type="PROSITE" id="PS00657">
    <property type="entry name" value="FORK_HEAD_1"/>
    <property type="match status" value="1"/>
</dbReference>
<dbReference type="PROSITE" id="PS00658">
    <property type="entry name" value="FORK_HEAD_2"/>
    <property type="match status" value="1"/>
</dbReference>
<dbReference type="PROSITE" id="PS50039">
    <property type="entry name" value="FORK_HEAD_3"/>
    <property type="match status" value="1"/>
</dbReference>
<gene>
    <name type="primary">Foxd2</name>
    <name type="synonym">Mf2</name>
</gene>
<proteinExistence type="evidence at transcript level"/>
<feature type="chain" id="PRO_0000091816" description="Forkhead box protein D2">
    <location>
        <begin position="1"/>
        <end position="492"/>
    </location>
</feature>
<feature type="DNA-binding region" description="Fork-head" evidence="2">
    <location>
        <begin position="129"/>
        <end position="223"/>
    </location>
</feature>
<feature type="region of interest" description="Disordered" evidence="3">
    <location>
        <begin position="13"/>
        <end position="125"/>
    </location>
</feature>
<feature type="region of interest" description="Disordered" evidence="3">
    <location>
        <begin position="309"/>
        <end position="344"/>
    </location>
</feature>
<feature type="region of interest" description="Disordered" evidence="3">
    <location>
        <begin position="394"/>
        <end position="441"/>
    </location>
</feature>
<feature type="compositionally biased region" description="Low complexity" evidence="3">
    <location>
        <begin position="13"/>
        <end position="22"/>
    </location>
</feature>
<feature type="compositionally biased region" description="Basic and acidic residues" evidence="3">
    <location>
        <begin position="47"/>
        <end position="59"/>
    </location>
</feature>
<feature type="compositionally biased region" description="Acidic residues" evidence="3">
    <location>
        <begin position="60"/>
        <end position="74"/>
    </location>
</feature>
<feature type="compositionally biased region" description="Low complexity" evidence="3">
    <location>
        <begin position="83"/>
        <end position="107"/>
    </location>
</feature>
<feature type="compositionally biased region" description="Low complexity" evidence="3">
    <location>
        <begin position="323"/>
        <end position="334"/>
    </location>
</feature>
<feature type="compositionally biased region" description="Gly residues" evidence="3">
    <location>
        <begin position="394"/>
        <end position="403"/>
    </location>
</feature>
<feature type="compositionally biased region" description="Gly residues" evidence="3">
    <location>
        <begin position="416"/>
        <end position="431"/>
    </location>
</feature>
<feature type="modified residue" description="Phosphoserine" evidence="1">
    <location>
        <position position="96"/>
    </location>
</feature>
<reference key="1">
    <citation type="journal article" date="1998" name="Mech. Dev.">
        <title>Mouse mesenchyme forkhead 2 (Mf2): expression, DNA binding and induction by sonic hedgehog during somitogenesis.</title>
        <authorList>
            <person name="Wu S.C.-Y."/>
            <person name="Grindley J."/>
            <person name="Winnier G.E."/>
            <person name="Hargett L."/>
            <person name="Hogan B.L.M."/>
        </authorList>
    </citation>
    <scope>NUCLEOTIDE SEQUENCE [MRNA]</scope>
    <scope>FUNCTION</scope>
    <scope>TISSUE SPECIFICITY</scope>
    <source>
        <tissue>Mesenchymal cell</tissue>
    </source>
</reference>
<reference key="2">
    <citation type="journal article" date="2009" name="PLoS Biol.">
        <title>Lineage-specific biology revealed by a finished genome assembly of the mouse.</title>
        <authorList>
            <person name="Church D.M."/>
            <person name="Goodstadt L."/>
            <person name="Hillier L.W."/>
            <person name="Zody M.C."/>
            <person name="Goldstein S."/>
            <person name="She X."/>
            <person name="Bult C.J."/>
            <person name="Agarwala R."/>
            <person name="Cherry J.L."/>
            <person name="DiCuccio M."/>
            <person name="Hlavina W."/>
            <person name="Kapustin Y."/>
            <person name="Meric P."/>
            <person name="Maglott D."/>
            <person name="Birtle Z."/>
            <person name="Marques A.C."/>
            <person name="Graves T."/>
            <person name="Zhou S."/>
            <person name="Teague B."/>
            <person name="Potamousis K."/>
            <person name="Churas C."/>
            <person name="Place M."/>
            <person name="Herschleb J."/>
            <person name="Runnheim R."/>
            <person name="Forrest D."/>
            <person name="Amos-Landgraf J."/>
            <person name="Schwartz D.C."/>
            <person name="Cheng Z."/>
            <person name="Lindblad-Toh K."/>
            <person name="Eichler E.E."/>
            <person name="Ponting C.P."/>
        </authorList>
    </citation>
    <scope>NUCLEOTIDE SEQUENCE [LARGE SCALE GENOMIC DNA]</scope>
    <source>
        <strain>C57BL/6J</strain>
    </source>
</reference>
<name>FOXD2_MOUSE</name>
<evidence type="ECO:0000250" key="1">
    <source>
        <dbReference type="UniProtKB" id="O60548"/>
    </source>
</evidence>
<evidence type="ECO:0000255" key="2">
    <source>
        <dbReference type="PROSITE-ProRule" id="PRU00089"/>
    </source>
</evidence>
<evidence type="ECO:0000256" key="3">
    <source>
        <dbReference type="SAM" id="MobiDB-lite"/>
    </source>
</evidence>
<evidence type="ECO:0000269" key="4">
    <source>
    </source>
</evidence>
<evidence type="ECO:0000305" key="5"/>
<comment type="function">
    <text evidence="4">Probable transcription factor involved in embryogenesis and somatogenesis.</text>
</comment>
<comment type="subcellular location">
    <subcellularLocation>
        <location evidence="5">Nucleus</location>
    </subcellularLocation>
</comment>
<comment type="tissue specificity">
    <text evidence="4">Expressed at high levels in the ventral region of newly formed somites, in sclerotomal derivatives, in lateral plate and cephalic mesoderm and in the first and second branchial arches. Other regions of mesodermal expression include the developing tongue, meninges, nose, whiskers, kidney, genital tubercule and limb joints. In the nervous system it is transcribed in restricted regions of the mid- and forebrain.</text>
</comment>
<protein>
    <recommendedName>
        <fullName>Forkhead box protein D2</fullName>
    </recommendedName>
    <alternativeName>
        <fullName>Mesoderm/mesenchyme forkhead 2</fullName>
        <shortName>MF-2</shortName>
    </alternativeName>
</protein>
<keyword id="KW-0238">DNA-binding</keyword>
<keyword id="KW-0539">Nucleus</keyword>
<keyword id="KW-0597">Phosphoprotein</keyword>
<keyword id="KW-1185">Reference proteome</keyword>
<keyword id="KW-0804">Transcription</keyword>
<keyword id="KW-0805">Transcription regulation</keyword>